<keyword id="KW-0227">DNA damage</keyword>
<keyword id="KW-0234">DNA repair</keyword>
<keyword id="KW-0539">Nucleus</keyword>
<keyword id="KW-1185">Reference proteome</keyword>
<keyword id="KW-0804">Transcription</keyword>
<keyword id="KW-0805">Transcription regulation</keyword>
<evidence type="ECO:0000250" key="1"/>
<evidence type="ECO:0000250" key="2">
    <source>
        <dbReference type="UniProtKB" id="Q02939"/>
    </source>
</evidence>
<evidence type="ECO:0000305" key="3"/>
<name>TFB2_KLULA</name>
<feature type="chain" id="PRO_0000119265" description="General transcription and DNA repair factor IIH subunit TFB2">
    <location>
        <begin position="1"/>
        <end position="496"/>
    </location>
</feature>
<accession>Q6CLR2</accession>
<dbReference type="EMBL" id="CR382126">
    <property type="protein sequence ID" value="CAG97834.1"/>
    <property type="molecule type" value="Genomic_DNA"/>
</dbReference>
<dbReference type="RefSeq" id="XP_455127.1">
    <property type="nucleotide sequence ID" value="XM_455127.1"/>
</dbReference>
<dbReference type="SMR" id="Q6CLR2"/>
<dbReference type="FunCoup" id="Q6CLR2">
    <property type="interactions" value="542"/>
</dbReference>
<dbReference type="STRING" id="284590.Q6CLR2"/>
<dbReference type="PaxDb" id="284590-Q6CLR2"/>
<dbReference type="KEGG" id="kla:KLLA0_F01056g"/>
<dbReference type="eggNOG" id="KOG3471">
    <property type="taxonomic scope" value="Eukaryota"/>
</dbReference>
<dbReference type="HOGENOM" id="CLU_027280_4_0_1"/>
<dbReference type="InParanoid" id="Q6CLR2"/>
<dbReference type="OMA" id="KGFIIIE"/>
<dbReference type="Proteomes" id="UP000000598">
    <property type="component" value="Chromosome F"/>
</dbReference>
<dbReference type="GO" id="GO:0000439">
    <property type="term" value="C:transcription factor TFIIH core complex"/>
    <property type="evidence" value="ECO:0007669"/>
    <property type="project" value="InterPro"/>
</dbReference>
<dbReference type="GO" id="GO:0005675">
    <property type="term" value="C:transcription factor TFIIH holo complex"/>
    <property type="evidence" value="ECO:0007669"/>
    <property type="project" value="TreeGrafter"/>
</dbReference>
<dbReference type="GO" id="GO:0001671">
    <property type="term" value="F:ATPase activator activity"/>
    <property type="evidence" value="ECO:0007669"/>
    <property type="project" value="InterPro"/>
</dbReference>
<dbReference type="GO" id="GO:0003690">
    <property type="term" value="F:double-stranded DNA binding"/>
    <property type="evidence" value="ECO:0007669"/>
    <property type="project" value="TreeGrafter"/>
</dbReference>
<dbReference type="GO" id="GO:0006289">
    <property type="term" value="P:nucleotide-excision repair"/>
    <property type="evidence" value="ECO:0007669"/>
    <property type="project" value="InterPro"/>
</dbReference>
<dbReference type="FunFam" id="3.30.70.2610:FF:000001">
    <property type="entry name" value="General transcription factor IIH subunit 4"/>
    <property type="match status" value="1"/>
</dbReference>
<dbReference type="Gene3D" id="3.30.70.2610">
    <property type="match status" value="1"/>
</dbReference>
<dbReference type="InterPro" id="IPR040662">
    <property type="entry name" value="Tfb2_C"/>
</dbReference>
<dbReference type="InterPro" id="IPR004598">
    <property type="entry name" value="TFIIH_p52/Tfb2"/>
</dbReference>
<dbReference type="NCBIfam" id="TIGR00625">
    <property type="entry name" value="tfb2"/>
    <property type="match status" value="1"/>
</dbReference>
<dbReference type="PANTHER" id="PTHR13152:SF0">
    <property type="entry name" value="GENERAL TRANSCRIPTION FACTOR IIH SUBUNIT 4"/>
    <property type="match status" value="1"/>
</dbReference>
<dbReference type="PANTHER" id="PTHR13152">
    <property type="entry name" value="TFIIH, POLYPEPTIDE 4"/>
    <property type="match status" value="1"/>
</dbReference>
<dbReference type="Pfam" id="PF03849">
    <property type="entry name" value="Tfb2"/>
    <property type="match status" value="1"/>
</dbReference>
<dbReference type="Pfam" id="PF18307">
    <property type="entry name" value="Tfb2_C"/>
    <property type="match status" value="1"/>
</dbReference>
<proteinExistence type="inferred from homology"/>
<protein>
    <recommendedName>
        <fullName>General transcription and DNA repair factor IIH subunit TFB2</fullName>
        <shortName>TFIIH subunit TFB2</shortName>
    </recommendedName>
    <alternativeName>
        <fullName>RNA polymerase II transcription factor B subunit 2</fullName>
    </alternativeName>
</protein>
<organism>
    <name type="scientific">Kluyveromyces lactis (strain ATCC 8585 / CBS 2359 / DSM 70799 / NBRC 1267 / NRRL Y-1140 / WM37)</name>
    <name type="common">Yeast</name>
    <name type="synonym">Candida sphaerica</name>
    <dbReference type="NCBI Taxonomy" id="284590"/>
    <lineage>
        <taxon>Eukaryota</taxon>
        <taxon>Fungi</taxon>
        <taxon>Dikarya</taxon>
        <taxon>Ascomycota</taxon>
        <taxon>Saccharomycotina</taxon>
        <taxon>Saccharomycetes</taxon>
        <taxon>Saccharomycetales</taxon>
        <taxon>Saccharomycetaceae</taxon>
        <taxon>Kluyveromyces</taxon>
    </lineage>
</organism>
<reference key="1">
    <citation type="journal article" date="2004" name="Nature">
        <title>Genome evolution in yeasts.</title>
        <authorList>
            <person name="Dujon B."/>
            <person name="Sherman D."/>
            <person name="Fischer G."/>
            <person name="Durrens P."/>
            <person name="Casaregola S."/>
            <person name="Lafontaine I."/>
            <person name="de Montigny J."/>
            <person name="Marck C."/>
            <person name="Neuveglise C."/>
            <person name="Talla E."/>
            <person name="Goffard N."/>
            <person name="Frangeul L."/>
            <person name="Aigle M."/>
            <person name="Anthouard V."/>
            <person name="Babour A."/>
            <person name="Barbe V."/>
            <person name="Barnay S."/>
            <person name="Blanchin S."/>
            <person name="Beckerich J.-M."/>
            <person name="Beyne E."/>
            <person name="Bleykasten C."/>
            <person name="Boisrame A."/>
            <person name="Boyer J."/>
            <person name="Cattolico L."/>
            <person name="Confanioleri F."/>
            <person name="de Daruvar A."/>
            <person name="Despons L."/>
            <person name="Fabre E."/>
            <person name="Fairhead C."/>
            <person name="Ferry-Dumazet H."/>
            <person name="Groppi A."/>
            <person name="Hantraye F."/>
            <person name="Hennequin C."/>
            <person name="Jauniaux N."/>
            <person name="Joyet P."/>
            <person name="Kachouri R."/>
            <person name="Kerrest A."/>
            <person name="Koszul R."/>
            <person name="Lemaire M."/>
            <person name="Lesur I."/>
            <person name="Ma L."/>
            <person name="Muller H."/>
            <person name="Nicaud J.-M."/>
            <person name="Nikolski M."/>
            <person name="Oztas S."/>
            <person name="Ozier-Kalogeropoulos O."/>
            <person name="Pellenz S."/>
            <person name="Potier S."/>
            <person name="Richard G.-F."/>
            <person name="Straub M.-L."/>
            <person name="Suleau A."/>
            <person name="Swennen D."/>
            <person name="Tekaia F."/>
            <person name="Wesolowski-Louvel M."/>
            <person name="Westhof E."/>
            <person name="Wirth B."/>
            <person name="Zeniou-Meyer M."/>
            <person name="Zivanovic Y."/>
            <person name="Bolotin-Fukuhara M."/>
            <person name="Thierry A."/>
            <person name="Bouchier C."/>
            <person name="Caudron B."/>
            <person name="Scarpelli C."/>
            <person name="Gaillardin C."/>
            <person name="Weissenbach J."/>
            <person name="Wincker P."/>
            <person name="Souciet J.-L."/>
        </authorList>
    </citation>
    <scope>NUCLEOTIDE SEQUENCE [LARGE SCALE GENOMIC DNA]</scope>
    <source>
        <strain>ATCC 8585 / CBS 2359 / DSM 70799 / NBRC 1267 / NRRL Y-1140 / WM37</strain>
    </source>
</reference>
<gene>
    <name type="primary">TFB2</name>
    <name type="ordered locus">KLLA0F01056g</name>
</gene>
<sequence length="496" mass="56741">MSLNLFKTTVNDYLEGLPEQVQSRLYESPATCLAIYRLLSPMAKFFIMSMLFQDHDVSLRDLDKWVKPDAKYQLQYSIKSMKSLNLIIEGESKQPLLIRLNPIFKKSFKNVLTGGEINNSFGDVADDDTNPVSTATLDQYSAEKWETILHYMVGTPNTNTPGGKVLDLLQHSGLMEEAEYGELKITNQGFQFLLQDVNAQMWTLLLQYLKMAESLQMDPVDVLNFIFMLGALQLGKAYKCDQLSNTQRTMLQDMRDYGLIYQNQSDYAKFYPTRLATLLTSDTKAFRSASVALDSVLNKANETTAVEGDSGQDETTERTQDGALIIETNFKLYSYSNSPLQIAILSLFVHLKSRFANMVTGQLTRESVRNALLNGITAEQIIAYLETHAHPRMRRLAEENLSKKLELDPTVKETLQVLPPTVVDQIRLWQLELDRIISYDGYLYTDFESYQEYQTVADYAKDIGVLLWQNEKKKMFFVSTEGNSQVLDFHRRNFDK</sequence>
<comment type="function">
    <text evidence="2">Component of the general transcription and DNA repair factor IIH (TFIIH) core complex, which is involved in general and transcription-coupled nucleotide excision repair (NER) of damaged DNA and, when complexed to TFIIK, in RNA transcription by RNA polymerase II. In NER, TFIIH acts by opening DNA around the lesion to allow the excision of the damaged oligonucleotide and its replacement by a new DNA fragment. In transcription, TFIIH has an essential role in transcription initiation. When the pre-initiation complex (PIC) has been established, TFIIH is required for promoter opening and promoter escape. Phosphorylation of the C-terminal tail (CTD) of the largest subunit of RNA polymerase II by the kinase module TFIIK controls the initiation of transcription.</text>
</comment>
<comment type="subunit">
    <text evidence="2">Component of the 7-subunit TFIIH core complex composed of XPB/SSL2, XPD/RAD3, SSL1, TFB1, TFB2, TFB4 and TFB5, which is active in NER. The core complex associates with the 3-subunit CTD-kinase module TFIIK composed of CCL1, KIN28 and TFB3 to form the 10-subunit holoenzyme (holo-TFIIH) active in transcription.</text>
</comment>
<comment type="subcellular location">
    <subcellularLocation>
        <location evidence="1">Nucleus</location>
    </subcellularLocation>
</comment>
<comment type="similarity">
    <text evidence="3">Belongs to the TFB2 family.</text>
</comment>